<organism>
    <name type="scientific">Calliophis bivirgatus</name>
    <name type="common">Blue Malaysian coral snake</name>
    <name type="synonym">Maticora bivirgata</name>
    <dbReference type="NCBI Taxonomy" id="8633"/>
    <lineage>
        <taxon>Eukaryota</taxon>
        <taxon>Metazoa</taxon>
        <taxon>Chordata</taxon>
        <taxon>Craniata</taxon>
        <taxon>Vertebrata</taxon>
        <taxon>Euteleostomi</taxon>
        <taxon>Lepidosauria</taxon>
        <taxon>Squamata</taxon>
        <taxon>Bifurcata</taxon>
        <taxon>Unidentata</taxon>
        <taxon>Episquamata</taxon>
        <taxon>Toxicofera</taxon>
        <taxon>Serpentes</taxon>
        <taxon>Colubroidea</taxon>
        <taxon>Elapidae</taxon>
        <taxon>Elapinae</taxon>
        <taxon>Calliophis</taxon>
    </lineage>
</organism>
<feature type="chain" id="PRO_0000442419" description="Delta-elapitoxin-Cb1a" evidence="2">
    <location>
        <begin position="1"/>
        <end position="57"/>
    </location>
</feature>
<feature type="disulfide bond" evidence="1">
    <location>
        <begin position="3"/>
        <end position="22"/>
    </location>
</feature>
<feature type="disulfide bond" evidence="1">
    <location>
        <begin position="15"/>
        <end position="36"/>
    </location>
</feature>
<feature type="disulfide bond" evidence="1">
    <location>
        <begin position="40"/>
        <end position="49"/>
    </location>
</feature>
<feature type="disulfide bond" evidence="1">
    <location>
        <begin position="50"/>
        <end position="55"/>
    </location>
</feature>
<comment type="function">
    <text evidence="2">This toxin shifts the voltage-dependence of Nav1.4/SCN4A activation to more hyperpolarised potentials, inhibits inactivation, and produces large ramp currents, consistent with its profound effects on contractile force in an isolated skeletal muscle preparation (PubMed:27763551). This toxin produces large muscle contractions and fasciculations in the indirectly stimulated chick biventer cervicis nerve-muscle assay, which are significantly inhibited by the addition of the sodium channel antagonist tetrodotoxin (PubMed:27763551).</text>
</comment>
<comment type="subcellular location">
    <subcellularLocation>
        <location evidence="2">Secreted</location>
    </subcellularLocation>
</comment>
<comment type="tissue specificity">
    <text evidence="5">Expressed by the venom gland.</text>
</comment>
<comment type="mass spectrometry">
    <text>Monoisotopic mass.</text>
</comment>
<comment type="similarity">
    <text evidence="4">Belongs to the three-finger toxin family. Short-chain subfamily.</text>
</comment>
<dbReference type="SMR" id="P0DL82"/>
<dbReference type="GO" id="GO:0005576">
    <property type="term" value="C:extracellular region"/>
    <property type="evidence" value="ECO:0007669"/>
    <property type="project" value="UniProtKB-SubCell"/>
</dbReference>
<dbReference type="GO" id="GO:0017080">
    <property type="term" value="F:sodium channel regulator activity"/>
    <property type="evidence" value="ECO:0007669"/>
    <property type="project" value="UniProtKB-KW"/>
</dbReference>
<dbReference type="GO" id="GO:0090729">
    <property type="term" value="F:toxin activity"/>
    <property type="evidence" value="ECO:0007669"/>
    <property type="project" value="UniProtKB-KW"/>
</dbReference>
<dbReference type="CDD" id="cd00206">
    <property type="entry name" value="TFP_snake_toxin"/>
    <property type="match status" value="1"/>
</dbReference>
<dbReference type="Gene3D" id="2.10.60.10">
    <property type="entry name" value="CD59"/>
    <property type="match status" value="1"/>
</dbReference>
<dbReference type="InterPro" id="IPR003571">
    <property type="entry name" value="Snake_3FTx"/>
</dbReference>
<dbReference type="InterPro" id="IPR045860">
    <property type="entry name" value="Snake_toxin-like_sf"/>
</dbReference>
<dbReference type="InterPro" id="IPR054131">
    <property type="entry name" value="Toxin_cobra-type"/>
</dbReference>
<dbReference type="Pfam" id="PF21947">
    <property type="entry name" value="Toxin_cobra-type"/>
    <property type="match status" value="1"/>
</dbReference>
<dbReference type="SUPFAM" id="SSF57302">
    <property type="entry name" value="Snake toxin-like"/>
    <property type="match status" value="1"/>
</dbReference>
<accession>P0DL82</accession>
<sequence>LECYDTIFKWHTMTCPEGQNLCFYYFTWRIFLVRGCTATCPVGYSHTHCCDTDKCNN</sequence>
<reference key="1">
    <citation type="journal article" date="2016" name="Toxins">
        <title>The snake with the scorpion's sting: novel three-finger toxin sodium channel activators from the venom of the long-glanded blue coral snake (Calliophis bivirgatus).</title>
        <authorList>
            <person name="Yang D.C."/>
            <person name="Deuis J.R."/>
            <person name="Dashevsky D."/>
            <person name="Dobson J."/>
            <person name="Jackson T.N."/>
            <person name="Brust A."/>
            <person name="Xie B."/>
            <person name="Koludarov I."/>
            <person name="Debono J."/>
            <person name="Hendrikx I."/>
            <person name="Hodgson W.C."/>
            <person name="Josh P."/>
            <person name="Nouwens A."/>
            <person name="Baillie G.J."/>
            <person name="Bruxner T.J."/>
            <person name="Alewood P.F."/>
            <person name="Lim K.K."/>
            <person name="Frank N."/>
            <person name="Vetter I."/>
            <person name="Fry B.G."/>
        </authorList>
    </citation>
    <scope>NUCLEOTIDE SEQUENCE [MRNA]</scope>
    <scope>PROTEIN SEQUENCE</scope>
    <scope>FUNCTION</scope>
    <scope>SUBCELLULAR LOCATION</scope>
    <scope>MASS SPECTROMETRY</scope>
    <source>
        <tissue>Venom</tissue>
        <tissue>Venom gland</tissue>
    </source>
</reference>
<name>3SXNA_CALBG</name>
<proteinExistence type="evidence at protein level"/>
<keyword id="KW-0903">Direct protein sequencing</keyword>
<keyword id="KW-1015">Disulfide bond</keyword>
<keyword id="KW-0872">Ion channel impairing toxin</keyword>
<keyword id="KW-0528">Neurotoxin</keyword>
<keyword id="KW-0964">Secreted</keyword>
<keyword id="KW-0800">Toxin</keyword>
<keyword id="KW-0738">Voltage-gated sodium channel impairing toxin</keyword>
<evidence type="ECO:0000250" key="1">
    <source>
        <dbReference type="UniProtKB" id="P85092"/>
    </source>
</evidence>
<evidence type="ECO:0000269" key="2">
    <source>
    </source>
</evidence>
<evidence type="ECO:0000303" key="3">
    <source>
    </source>
</evidence>
<evidence type="ECO:0000305" key="4"/>
<evidence type="ECO:0000305" key="5">
    <source>
    </source>
</evidence>
<protein>
    <recommendedName>
        <fullName evidence="3">Delta-elapitoxin-Cb1a</fullName>
        <shortName evidence="5">Delta-EPTX-Cb1a</shortName>
    </recommendedName>
    <alternativeName>
        <fullName evidence="3">Calliotoxin</fullName>
    </alternativeName>
    <alternativeName>
        <fullName>Three-finger toxin</fullName>
        <shortName>3FTx</shortName>
    </alternativeName>
</protein>